<protein>
    <recommendedName>
        <fullName>Uncharacterized protein TC_0036</fullName>
    </recommendedName>
</protein>
<comment type="similarity">
    <text evidence="1">Belongs to the chlamydial CPn_0711/CT_665/TC_0036 family.</text>
</comment>
<accession>Q9PLQ9</accession>
<dbReference type="EMBL" id="AE002160">
    <property type="protein sequence ID" value="AAF38927.1"/>
    <property type="molecule type" value="Genomic_DNA"/>
</dbReference>
<dbReference type="PIR" id="H81748">
    <property type="entry name" value="H81748"/>
</dbReference>
<dbReference type="RefSeq" id="WP_010229180.1">
    <property type="nucleotide sequence ID" value="NZ_CP063055.1"/>
</dbReference>
<dbReference type="SMR" id="Q9PLQ9"/>
<dbReference type="GeneID" id="1245561"/>
<dbReference type="KEGG" id="cmu:TC_0036"/>
<dbReference type="HOGENOM" id="CLU_185897_0_0_0"/>
<dbReference type="OrthoDB" id="18174at2"/>
<dbReference type="Proteomes" id="UP000000800">
    <property type="component" value="Chromosome"/>
</dbReference>
<dbReference type="InterPro" id="IPR035336">
    <property type="entry name" value="DUF5398"/>
</dbReference>
<dbReference type="Pfam" id="PF17376">
    <property type="entry name" value="DUF5398"/>
    <property type="match status" value="1"/>
</dbReference>
<gene>
    <name type="ordered locus">TC_0036</name>
</gene>
<organism>
    <name type="scientific">Chlamydia muridarum (strain MoPn / Nigg)</name>
    <dbReference type="NCBI Taxonomy" id="243161"/>
    <lineage>
        <taxon>Bacteria</taxon>
        <taxon>Pseudomonadati</taxon>
        <taxon>Chlamydiota</taxon>
        <taxon>Chlamydiia</taxon>
        <taxon>Chlamydiales</taxon>
        <taxon>Chlamydiaceae</taxon>
        <taxon>Chlamydia/Chlamydophila group</taxon>
        <taxon>Chlamydia</taxon>
    </lineage>
</organism>
<proteinExistence type="inferred from homology"/>
<evidence type="ECO:0000305" key="1"/>
<reference key="1">
    <citation type="journal article" date="2000" name="Nucleic Acids Res.">
        <title>Genome sequences of Chlamydia trachomatis MoPn and Chlamydia pneumoniae AR39.</title>
        <authorList>
            <person name="Read T.D."/>
            <person name="Brunham R.C."/>
            <person name="Shen C."/>
            <person name="Gill S.R."/>
            <person name="Heidelberg J.F."/>
            <person name="White O."/>
            <person name="Hickey E.K."/>
            <person name="Peterson J.D."/>
            <person name="Utterback T.R."/>
            <person name="Berry K.J."/>
            <person name="Bass S."/>
            <person name="Linher K.D."/>
            <person name="Weidman J.F."/>
            <person name="Khouri H.M."/>
            <person name="Craven B."/>
            <person name="Bowman C."/>
            <person name="Dodson R.J."/>
            <person name="Gwinn M.L."/>
            <person name="Nelson W.C."/>
            <person name="DeBoy R.T."/>
            <person name="Kolonay J.F."/>
            <person name="McClarty G."/>
            <person name="Salzberg S.L."/>
            <person name="Eisen J.A."/>
            <person name="Fraser C.M."/>
        </authorList>
    </citation>
    <scope>NUCLEOTIDE SEQUENCE [LARGE SCALE GENOMIC DNA]</scope>
    <source>
        <strain>MoPn / Nigg</strain>
    </source>
</reference>
<sequence length="84" mass="9532">MFNMENSAAKEKTAARQQLFDLEQDMHDLTKAHEINTNVQSKVQKVTASLREGASKESFEKQHTLLAGYVALQKVLGRINRKMV</sequence>
<feature type="chain" id="PRO_0000218418" description="Uncharacterized protein TC_0036">
    <location>
        <begin position="1"/>
        <end position="84"/>
    </location>
</feature>
<name>Y036_CHLMU</name>